<proteinExistence type="inferred from homology"/>
<sequence length="485" mass="55200">MSSSLKQLKEQFVSDLTGGTIEEIYAVTSIALSSYLSFRLLKKSLGDLALIYDYILNVLTILASITVYSNSPSYLHYFIVIPSLVIYLVNYHVEKPSSPHRQNDTKEDKSDELLPRKQFITAYRSQMLIITNLAILAVDFPIFPRRFAKVETWGTSMMDLGVGSFVFSMGLANSRQLIKNHTDNYKFSWKSYLKTIKQNFIKSVPILVLGAIRFVSVKQLDYQEHETEYGIHWNFFFTLGFLPIVLGILDPVLNLVPRFIIGIGISIAYEVALNKTGLLKFILSSENRLESLITMNKEGIFSFIGYLCIFIIGQSFGSFVLTGYKTKNNLITISKIRISKKQHKKESSSFFSVATTQGLYLACIFYHLAFSLFISNLSFLQPISRRLANFPYVMWVVSYNATFLLCYDLIEKFIPGNLTSTVLDSINNNGLFIFLVSNLLTGFINMSINTLETSNKMAVIILIGYSLTWTLLALYLDKRKIYIKL</sequence>
<name>GWT1_CANAL</name>
<organism>
    <name type="scientific">Candida albicans (strain SC5314 / ATCC MYA-2876)</name>
    <name type="common">Yeast</name>
    <dbReference type="NCBI Taxonomy" id="237561"/>
    <lineage>
        <taxon>Eukaryota</taxon>
        <taxon>Fungi</taxon>
        <taxon>Dikarya</taxon>
        <taxon>Ascomycota</taxon>
        <taxon>Saccharomycotina</taxon>
        <taxon>Pichiomycetes</taxon>
        <taxon>Debaryomycetaceae</taxon>
        <taxon>Candida/Lodderomyces clade</taxon>
        <taxon>Candida</taxon>
    </lineage>
</organism>
<comment type="function">
    <text evidence="1">Probable acetyltransferase, which acetylates the inositol ring of phosphatidylinositol during biosynthesis of GPI-anchor.</text>
</comment>
<comment type="pathway">
    <text>Glycolipid biosynthesis; glycosylphosphatidylinositol-anchor biosynthesis.</text>
</comment>
<comment type="subcellular location">
    <subcellularLocation>
        <location evidence="1">Endoplasmic reticulum membrane</location>
        <topology evidence="1">Multi-pass membrane protein</topology>
    </subcellularLocation>
</comment>
<comment type="similarity">
    <text evidence="4">Belongs to the PIGW family.</text>
</comment>
<gene>
    <name type="primary">GWT1</name>
    <name type="ordered locus">CAALFM_C205730CA</name>
    <name type="ORF">CaO19.14173</name>
    <name type="ORF">CaO19.6884</name>
</gene>
<keyword id="KW-0012">Acyltransferase</keyword>
<keyword id="KW-0256">Endoplasmic reticulum</keyword>
<keyword id="KW-0325">Glycoprotein</keyword>
<keyword id="KW-0337">GPI-anchor biosynthesis</keyword>
<keyword id="KW-0472">Membrane</keyword>
<keyword id="KW-1185">Reference proteome</keyword>
<keyword id="KW-0808">Transferase</keyword>
<keyword id="KW-0812">Transmembrane</keyword>
<keyword id="KW-1133">Transmembrane helix</keyword>
<accession>Q873N2</accession>
<accession>A0A1D8PHG5</accession>
<accession>Q59T33</accession>
<evidence type="ECO:0000250" key="1"/>
<evidence type="ECO:0000255" key="2"/>
<evidence type="ECO:0000255" key="3">
    <source>
        <dbReference type="PROSITE-ProRule" id="PRU00498"/>
    </source>
</evidence>
<evidence type="ECO:0000305" key="4"/>
<reference key="1">
    <citation type="journal article" date="2003" name="Mol. Microbiol.">
        <title>Medicinal genetics approach towards identifying the molecular target of a novel inhibitor of fungal cell wall assembly.</title>
        <authorList>
            <person name="Tsukahara K."/>
            <person name="Hata K."/>
            <person name="Nakamoto K."/>
            <person name="Sagane K."/>
            <person name="Watanabe N.-A."/>
            <person name="Kuromitsu J."/>
            <person name="Kai J."/>
            <person name="Tsuchiya M."/>
            <person name="Ohba F."/>
            <person name="Jigami Y."/>
            <person name="Yoshimatsu K."/>
            <person name="Nagasu T."/>
        </authorList>
    </citation>
    <scope>NUCLEOTIDE SEQUENCE [GENOMIC DNA]</scope>
    <source>
        <strain>E81022</strain>
    </source>
</reference>
<reference key="2">
    <citation type="journal article" date="2004" name="Proc. Natl. Acad. Sci. U.S.A.">
        <title>The diploid genome sequence of Candida albicans.</title>
        <authorList>
            <person name="Jones T."/>
            <person name="Federspiel N.A."/>
            <person name="Chibana H."/>
            <person name="Dungan J."/>
            <person name="Kalman S."/>
            <person name="Magee B.B."/>
            <person name="Newport G."/>
            <person name="Thorstenson Y.R."/>
            <person name="Agabian N."/>
            <person name="Magee P.T."/>
            <person name="Davis R.W."/>
            <person name="Scherer S."/>
        </authorList>
    </citation>
    <scope>NUCLEOTIDE SEQUENCE [LARGE SCALE GENOMIC DNA]</scope>
    <source>
        <strain>SC5314 / ATCC MYA-2876</strain>
    </source>
</reference>
<reference key="3">
    <citation type="journal article" date="2007" name="Genome Biol.">
        <title>Assembly of the Candida albicans genome into sixteen supercontigs aligned on the eight chromosomes.</title>
        <authorList>
            <person name="van het Hoog M."/>
            <person name="Rast T.J."/>
            <person name="Martchenko M."/>
            <person name="Grindle S."/>
            <person name="Dignard D."/>
            <person name="Hogues H."/>
            <person name="Cuomo C."/>
            <person name="Berriman M."/>
            <person name="Scherer S."/>
            <person name="Magee B.B."/>
            <person name="Whiteway M."/>
            <person name="Chibana H."/>
            <person name="Nantel A."/>
            <person name="Magee P.T."/>
        </authorList>
    </citation>
    <scope>GENOME REANNOTATION</scope>
    <source>
        <strain>SC5314 / ATCC MYA-2876</strain>
    </source>
</reference>
<reference key="4">
    <citation type="journal article" date="2013" name="Genome Biol.">
        <title>Assembly of a phased diploid Candida albicans genome facilitates allele-specific measurements and provides a simple model for repeat and indel structure.</title>
        <authorList>
            <person name="Muzzey D."/>
            <person name="Schwartz K."/>
            <person name="Weissman J.S."/>
            <person name="Sherlock G."/>
        </authorList>
    </citation>
    <scope>NUCLEOTIDE SEQUENCE [LARGE SCALE GENOMIC DNA]</scope>
    <scope>GENOME REANNOTATION</scope>
    <source>
        <strain>SC5314 / ATCC MYA-2876</strain>
    </source>
</reference>
<protein>
    <recommendedName>
        <fullName>GPI-anchored wall transfer protein 1</fullName>
        <ecNumber>2.3.-.-</ecNumber>
    </recommendedName>
</protein>
<dbReference type="EC" id="2.3.-.-"/>
<dbReference type="EMBL" id="AB092481">
    <property type="protein sequence ID" value="BAC66174.1"/>
    <property type="molecule type" value="Genomic_DNA"/>
</dbReference>
<dbReference type="EMBL" id="CP017624">
    <property type="protein sequence ID" value="AOW27584.1"/>
    <property type="molecule type" value="Genomic_DNA"/>
</dbReference>
<dbReference type="RefSeq" id="XP_712813.2">
    <property type="nucleotide sequence ID" value="XM_707720.2"/>
</dbReference>
<dbReference type="SMR" id="Q873N2"/>
<dbReference type="FunCoup" id="Q873N2">
    <property type="interactions" value="581"/>
</dbReference>
<dbReference type="STRING" id="237561.Q873N2"/>
<dbReference type="ChEMBL" id="CHEMBL4523379"/>
<dbReference type="ChEMBL" id="CHEMBL4662934"/>
<dbReference type="GlyCosmos" id="Q873N2">
    <property type="glycosylation" value="3 sites, No reported glycans"/>
</dbReference>
<dbReference type="EnsemblFungi" id="C2_05730C_A-T">
    <property type="protein sequence ID" value="C2_05730C_A-T-p1"/>
    <property type="gene ID" value="C2_05730C_A"/>
</dbReference>
<dbReference type="GeneID" id="3645575"/>
<dbReference type="KEGG" id="cal:CAALFM_C205730CA"/>
<dbReference type="CGD" id="CAL0000196562">
    <property type="gene designation" value="GWT1"/>
</dbReference>
<dbReference type="VEuPathDB" id="FungiDB:C2_05730C_A"/>
<dbReference type="eggNOG" id="KOG0411">
    <property type="taxonomic scope" value="Eukaryota"/>
</dbReference>
<dbReference type="HOGENOM" id="CLU_020802_2_2_1"/>
<dbReference type="InParanoid" id="Q873N2"/>
<dbReference type="OrthoDB" id="15270at2759"/>
<dbReference type="UniPathway" id="UPA00196"/>
<dbReference type="PRO" id="PR:Q873N2"/>
<dbReference type="Proteomes" id="UP000000559">
    <property type="component" value="Chromosome 2"/>
</dbReference>
<dbReference type="GO" id="GO:0005789">
    <property type="term" value="C:endoplasmic reticulum membrane"/>
    <property type="evidence" value="ECO:0007669"/>
    <property type="project" value="UniProtKB-SubCell"/>
</dbReference>
<dbReference type="GO" id="GO:0032216">
    <property type="term" value="F:glucosaminyl-phosphatidylinositol O-acyltransferase activity"/>
    <property type="evidence" value="ECO:0000315"/>
    <property type="project" value="CGD"/>
</dbReference>
<dbReference type="GO" id="GO:0006506">
    <property type="term" value="P:GPI anchor biosynthetic process"/>
    <property type="evidence" value="ECO:0000315"/>
    <property type="project" value="CGD"/>
</dbReference>
<dbReference type="InterPro" id="IPR009447">
    <property type="entry name" value="PIGW/GWT1"/>
</dbReference>
<dbReference type="PANTHER" id="PTHR20661">
    <property type="entry name" value="PHOSPHATIDYLINOSITOL-GLYCAN BIOSYNTHESIS CLASS W PROTEIN"/>
    <property type="match status" value="1"/>
</dbReference>
<dbReference type="PANTHER" id="PTHR20661:SF0">
    <property type="entry name" value="PHOSPHATIDYLINOSITOL-GLYCAN BIOSYNTHESIS CLASS W PROTEIN"/>
    <property type="match status" value="1"/>
</dbReference>
<dbReference type="Pfam" id="PF06423">
    <property type="entry name" value="GWT1"/>
    <property type="match status" value="1"/>
</dbReference>
<dbReference type="PIRSF" id="PIRSF017321">
    <property type="entry name" value="GWT1"/>
    <property type="match status" value="1"/>
</dbReference>
<feature type="chain" id="PRO_0000215184" description="GPI-anchored wall transfer protein 1">
    <location>
        <begin position="1"/>
        <end position="485"/>
    </location>
</feature>
<feature type="transmembrane region" description="Helical" evidence="2">
    <location>
        <begin position="48"/>
        <end position="68"/>
    </location>
</feature>
<feature type="transmembrane region" description="Helical" evidence="2">
    <location>
        <begin position="73"/>
        <end position="93"/>
    </location>
</feature>
<feature type="transmembrane region" description="Helical" evidence="2">
    <location>
        <begin position="123"/>
        <end position="143"/>
    </location>
</feature>
<feature type="transmembrane region" description="Helical" evidence="2">
    <location>
        <begin position="152"/>
        <end position="172"/>
    </location>
</feature>
<feature type="transmembrane region" description="Helical" evidence="2">
    <location>
        <begin position="200"/>
        <end position="217"/>
    </location>
</feature>
<feature type="transmembrane region" description="Helical" evidence="2">
    <location>
        <begin position="229"/>
        <end position="249"/>
    </location>
</feature>
<feature type="transmembrane region" description="Helical" evidence="2">
    <location>
        <begin position="259"/>
        <end position="279"/>
    </location>
</feature>
<feature type="transmembrane region" description="Helical" evidence="2">
    <location>
        <begin position="300"/>
        <end position="320"/>
    </location>
</feature>
<feature type="transmembrane region" description="Helical" evidence="2">
    <location>
        <begin position="359"/>
        <end position="379"/>
    </location>
</feature>
<feature type="transmembrane region" description="Helical" evidence="2">
    <location>
        <begin position="390"/>
        <end position="410"/>
    </location>
</feature>
<feature type="transmembrane region" description="Helical" evidence="2">
    <location>
        <begin position="431"/>
        <end position="451"/>
    </location>
</feature>
<feature type="transmembrane region" description="Helical" evidence="2">
    <location>
        <begin position="457"/>
        <end position="477"/>
    </location>
</feature>
<feature type="glycosylation site" description="N-linked (GlcNAc...) asparagine" evidence="3">
    <location>
        <position position="103"/>
    </location>
</feature>
<feature type="glycosylation site" description="N-linked (GlcNAc...) asparagine" evidence="3">
    <location>
        <position position="180"/>
    </location>
</feature>
<feature type="glycosylation site" description="N-linked (GlcNAc...) asparagine" evidence="3">
    <location>
        <position position="417"/>
    </location>
</feature>
<feature type="sequence conflict" description="In Ref. 1; BAC66174." evidence="4" ref="1">
    <original>A</original>
    <variation>G</variation>
    <location>
        <position position="268"/>
    </location>
</feature>
<feature type="sequence conflict" description="In Ref. 1; BAC66174." evidence="4" ref="1">
    <original>T</original>
    <variation>A</variation>
    <location>
        <position position="294"/>
    </location>
</feature>